<comment type="function">
    <text evidence="1">Plays an important role in the de novo pathway of purine nucleotide biosynthesis. Catalyzes the first committed step in the biosynthesis of AMP from IMP.</text>
</comment>
<comment type="catalytic activity">
    <reaction evidence="1">
        <text>IMP + L-aspartate + GTP = N(6)-(1,2-dicarboxyethyl)-AMP + GDP + phosphate + 2 H(+)</text>
        <dbReference type="Rhea" id="RHEA:15753"/>
        <dbReference type="ChEBI" id="CHEBI:15378"/>
        <dbReference type="ChEBI" id="CHEBI:29991"/>
        <dbReference type="ChEBI" id="CHEBI:37565"/>
        <dbReference type="ChEBI" id="CHEBI:43474"/>
        <dbReference type="ChEBI" id="CHEBI:57567"/>
        <dbReference type="ChEBI" id="CHEBI:58053"/>
        <dbReference type="ChEBI" id="CHEBI:58189"/>
        <dbReference type="EC" id="6.3.4.4"/>
    </reaction>
</comment>
<comment type="cofactor">
    <cofactor evidence="1">
        <name>Mg(2+)</name>
        <dbReference type="ChEBI" id="CHEBI:18420"/>
    </cofactor>
    <text evidence="1">Binds 1 Mg(2+) ion per subunit.</text>
</comment>
<comment type="pathway">
    <text evidence="1">Purine metabolism; AMP biosynthesis via de novo pathway; AMP from IMP: step 1/2.</text>
</comment>
<comment type="subunit">
    <text evidence="1">Homodimer.</text>
</comment>
<comment type="subcellular location">
    <subcellularLocation>
        <location evidence="1">Cytoplasm</location>
    </subcellularLocation>
</comment>
<comment type="similarity">
    <text evidence="1">Belongs to the adenylosuccinate synthetase family.</text>
</comment>
<accession>A1URK5</accession>
<dbReference type="EC" id="6.3.4.4" evidence="1"/>
<dbReference type="EMBL" id="CP000524">
    <property type="protein sequence ID" value="ABM45189.1"/>
    <property type="molecule type" value="Genomic_DNA"/>
</dbReference>
<dbReference type="RefSeq" id="WP_005766179.1">
    <property type="nucleotide sequence ID" value="NC_008783.1"/>
</dbReference>
<dbReference type="SMR" id="A1URK5"/>
<dbReference type="STRING" id="360095.BARBAKC583_0285"/>
<dbReference type="GeneID" id="4684673"/>
<dbReference type="KEGG" id="bbk:BARBAKC583_0285"/>
<dbReference type="PATRIC" id="fig|360095.6.peg.273"/>
<dbReference type="eggNOG" id="COG0104">
    <property type="taxonomic scope" value="Bacteria"/>
</dbReference>
<dbReference type="HOGENOM" id="CLU_029848_0_0_5"/>
<dbReference type="OrthoDB" id="9807553at2"/>
<dbReference type="UniPathway" id="UPA00075">
    <property type="reaction ID" value="UER00335"/>
</dbReference>
<dbReference type="Proteomes" id="UP000000643">
    <property type="component" value="Chromosome"/>
</dbReference>
<dbReference type="GO" id="GO:0005737">
    <property type="term" value="C:cytoplasm"/>
    <property type="evidence" value="ECO:0007669"/>
    <property type="project" value="UniProtKB-SubCell"/>
</dbReference>
<dbReference type="GO" id="GO:0004019">
    <property type="term" value="F:adenylosuccinate synthase activity"/>
    <property type="evidence" value="ECO:0007669"/>
    <property type="project" value="UniProtKB-UniRule"/>
</dbReference>
<dbReference type="GO" id="GO:0005525">
    <property type="term" value="F:GTP binding"/>
    <property type="evidence" value="ECO:0007669"/>
    <property type="project" value="UniProtKB-UniRule"/>
</dbReference>
<dbReference type="GO" id="GO:0000287">
    <property type="term" value="F:magnesium ion binding"/>
    <property type="evidence" value="ECO:0007669"/>
    <property type="project" value="UniProtKB-UniRule"/>
</dbReference>
<dbReference type="GO" id="GO:0044208">
    <property type="term" value="P:'de novo' AMP biosynthetic process"/>
    <property type="evidence" value="ECO:0007669"/>
    <property type="project" value="UniProtKB-UniRule"/>
</dbReference>
<dbReference type="GO" id="GO:0046040">
    <property type="term" value="P:IMP metabolic process"/>
    <property type="evidence" value="ECO:0007669"/>
    <property type="project" value="TreeGrafter"/>
</dbReference>
<dbReference type="CDD" id="cd03108">
    <property type="entry name" value="AdSS"/>
    <property type="match status" value="1"/>
</dbReference>
<dbReference type="FunFam" id="1.10.300.10:FF:000001">
    <property type="entry name" value="Adenylosuccinate synthetase"/>
    <property type="match status" value="1"/>
</dbReference>
<dbReference type="FunFam" id="3.90.170.10:FF:000001">
    <property type="entry name" value="Adenylosuccinate synthetase"/>
    <property type="match status" value="1"/>
</dbReference>
<dbReference type="Gene3D" id="3.40.440.10">
    <property type="entry name" value="Adenylosuccinate Synthetase, subunit A, domain 1"/>
    <property type="match status" value="1"/>
</dbReference>
<dbReference type="Gene3D" id="1.10.300.10">
    <property type="entry name" value="Adenylosuccinate Synthetase, subunit A, domain 2"/>
    <property type="match status" value="1"/>
</dbReference>
<dbReference type="Gene3D" id="3.90.170.10">
    <property type="entry name" value="Adenylosuccinate Synthetase, subunit A, domain 3"/>
    <property type="match status" value="1"/>
</dbReference>
<dbReference type="HAMAP" id="MF_00011">
    <property type="entry name" value="Adenylosucc_synth"/>
    <property type="match status" value="1"/>
</dbReference>
<dbReference type="InterPro" id="IPR018220">
    <property type="entry name" value="Adenylosuccin_syn_GTP-bd"/>
</dbReference>
<dbReference type="InterPro" id="IPR033128">
    <property type="entry name" value="Adenylosuccin_syn_Lys_AS"/>
</dbReference>
<dbReference type="InterPro" id="IPR042109">
    <property type="entry name" value="Adenylosuccinate_synth_dom1"/>
</dbReference>
<dbReference type="InterPro" id="IPR042110">
    <property type="entry name" value="Adenylosuccinate_synth_dom2"/>
</dbReference>
<dbReference type="InterPro" id="IPR042111">
    <property type="entry name" value="Adenylosuccinate_synth_dom3"/>
</dbReference>
<dbReference type="InterPro" id="IPR001114">
    <property type="entry name" value="Adenylosuccinate_synthetase"/>
</dbReference>
<dbReference type="InterPro" id="IPR027417">
    <property type="entry name" value="P-loop_NTPase"/>
</dbReference>
<dbReference type="NCBIfam" id="NF002223">
    <property type="entry name" value="PRK01117.1"/>
    <property type="match status" value="1"/>
</dbReference>
<dbReference type="NCBIfam" id="TIGR00184">
    <property type="entry name" value="purA"/>
    <property type="match status" value="1"/>
</dbReference>
<dbReference type="PANTHER" id="PTHR11846">
    <property type="entry name" value="ADENYLOSUCCINATE SYNTHETASE"/>
    <property type="match status" value="1"/>
</dbReference>
<dbReference type="PANTHER" id="PTHR11846:SF0">
    <property type="entry name" value="ADENYLOSUCCINATE SYNTHETASE"/>
    <property type="match status" value="1"/>
</dbReference>
<dbReference type="Pfam" id="PF00709">
    <property type="entry name" value="Adenylsucc_synt"/>
    <property type="match status" value="1"/>
</dbReference>
<dbReference type="SMART" id="SM00788">
    <property type="entry name" value="Adenylsucc_synt"/>
    <property type="match status" value="1"/>
</dbReference>
<dbReference type="SUPFAM" id="SSF52540">
    <property type="entry name" value="P-loop containing nucleoside triphosphate hydrolases"/>
    <property type="match status" value="1"/>
</dbReference>
<dbReference type="PROSITE" id="PS01266">
    <property type="entry name" value="ADENYLOSUCCIN_SYN_1"/>
    <property type="match status" value="1"/>
</dbReference>
<dbReference type="PROSITE" id="PS00513">
    <property type="entry name" value="ADENYLOSUCCIN_SYN_2"/>
    <property type="match status" value="1"/>
</dbReference>
<proteinExistence type="inferred from homology"/>
<feature type="chain" id="PRO_1000000781" description="Adenylosuccinate synthetase">
    <location>
        <begin position="1"/>
        <end position="429"/>
    </location>
</feature>
<feature type="active site" description="Proton acceptor" evidence="1">
    <location>
        <position position="13"/>
    </location>
</feature>
<feature type="active site" description="Proton donor" evidence="1">
    <location>
        <position position="41"/>
    </location>
</feature>
<feature type="binding site" evidence="1">
    <location>
        <begin position="12"/>
        <end position="18"/>
    </location>
    <ligand>
        <name>GTP</name>
        <dbReference type="ChEBI" id="CHEBI:37565"/>
    </ligand>
</feature>
<feature type="binding site" description="in other chain" evidence="1">
    <location>
        <begin position="13"/>
        <end position="16"/>
    </location>
    <ligand>
        <name>IMP</name>
        <dbReference type="ChEBI" id="CHEBI:58053"/>
        <note>ligand shared between dimeric partners</note>
    </ligand>
</feature>
<feature type="binding site" evidence="1">
    <location>
        <position position="13"/>
    </location>
    <ligand>
        <name>Mg(2+)</name>
        <dbReference type="ChEBI" id="CHEBI:18420"/>
    </ligand>
</feature>
<feature type="binding site" description="in other chain" evidence="1">
    <location>
        <begin position="38"/>
        <end position="41"/>
    </location>
    <ligand>
        <name>IMP</name>
        <dbReference type="ChEBI" id="CHEBI:58053"/>
        <note>ligand shared between dimeric partners</note>
    </ligand>
</feature>
<feature type="binding site" evidence="1">
    <location>
        <begin position="40"/>
        <end position="42"/>
    </location>
    <ligand>
        <name>GTP</name>
        <dbReference type="ChEBI" id="CHEBI:37565"/>
    </ligand>
</feature>
<feature type="binding site" evidence="1">
    <location>
        <position position="40"/>
    </location>
    <ligand>
        <name>Mg(2+)</name>
        <dbReference type="ChEBI" id="CHEBI:18420"/>
    </ligand>
</feature>
<feature type="binding site" description="in other chain" evidence="1">
    <location>
        <position position="129"/>
    </location>
    <ligand>
        <name>IMP</name>
        <dbReference type="ChEBI" id="CHEBI:58053"/>
        <note>ligand shared between dimeric partners</note>
    </ligand>
</feature>
<feature type="binding site" evidence="1">
    <location>
        <position position="143"/>
    </location>
    <ligand>
        <name>IMP</name>
        <dbReference type="ChEBI" id="CHEBI:58053"/>
        <note>ligand shared between dimeric partners</note>
    </ligand>
</feature>
<feature type="binding site" description="in other chain" evidence="1">
    <location>
        <position position="223"/>
    </location>
    <ligand>
        <name>IMP</name>
        <dbReference type="ChEBI" id="CHEBI:58053"/>
        <note>ligand shared between dimeric partners</note>
    </ligand>
</feature>
<feature type="binding site" description="in other chain" evidence="1">
    <location>
        <position position="238"/>
    </location>
    <ligand>
        <name>IMP</name>
        <dbReference type="ChEBI" id="CHEBI:58053"/>
        <note>ligand shared between dimeric partners</note>
    </ligand>
</feature>
<feature type="binding site" evidence="1">
    <location>
        <begin position="298"/>
        <end position="304"/>
    </location>
    <ligand>
        <name>substrate</name>
    </ligand>
</feature>
<feature type="binding site" description="in other chain" evidence="1">
    <location>
        <position position="302"/>
    </location>
    <ligand>
        <name>IMP</name>
        <dbReference type="ChEBI" id="CHEBI:58053"/>
        <note>ligand shared between dimeric partners</note>
    </ligand>
</feature>
<feature type="binding site" evidence="1">
    <location>
        <position position="304"/>
    </location>
    <ligand>
        <name>GTP</name>
        <dbReference type="ChEBI" id="CHEBI:37565"/>
    </ligand>
</feature>
<feature type="binding site" evidence="1">
    <location>
        <begin position="330"/>
        <end position="332"/>
    </location>
    <ligand>
        <name>GTP</name>
        <dbReference type="ChEBI" id="CHEBI:37565"/>
    </ligand>
</feature>
<feature type="binding site" evidence="1">
    <location>
        <begin position="412"/>
        <end position="414"/>
    </location>
    <ligand>
        <name>GTP</name>
        <dbReference type="ChEBI" id="CHEBI:37565"/>
    </ligand>
</feature>
<reference key="1">
    <citation type="submission" date="2006-12" db="EMBL/GenBank/DDBJ databases">
        <authorList>
            <person name="Hendrix L."/>
            <person name="Mohamoud Y."/>
            <person name="Radune D."/>
            <person name="Shvartsbeyn A."/>
            <person name="Daugherty S."/>
            <person name="Dodson R."/>
            <person name="Durkin A.S."/>
            <person name="Harkins D."/>
            <person name="Huot H."/>
            <person name="Kothari S.P."/>
            <person name="Madupu R."/>
            <person name="Li J."/>
            <person name="Nelson W.C."/>
            <person name="Shrivastava S."/>
            <person name="Giglio M.G."/>
            <person name="Haft D."/>
            <person name="Selengut J."/>
            <person name="Fraser-Ligget C."/>
            <person name="Seshadri R."/>
        </authorList>
    </citation>
    <scope>NUCLEOTIDE SEQUENCE [LARGE SCALE GENOMIC DNA]</scope>
    <source>
        <strain>ATCC 35685 / KC583 / Herrer 020/F12,63</strain>
    </source>
</reference>
<organism>
    <name type="scientific">Bartonella bacilliformis (strain ATCC 35685 / KC583 / Herrer 020/F12,63)</name>
    <dbReference type="NCBI Taxonomy" id="360095"/>
    <lineage>
        <taxon>Bacteria</taxon>
        <taxon>Pseudomonadati</taxon>
        <taxon>Pseudomonadota</taxon>
        <taxon>Alphaproteobacteria</taxon>
        <taxon>Hyphomicrobiales</taxon>
        <taxon>Bartonellaceae</taxon>
        <taxon>Bartonella</taxon>
    </lineage>
</organism>
<sequence length="429" mass="47404">MANVVVVGTQWGDEGKGKIVDWLSEQADVVVRYQGGHNAGHTLVINGISYKLSLLPSGVVRGKLSVIGNGVVVDPHHFVSELKKLRDQGVEITPKVLRVAENASLILSVHRDLDAARENGISGLTIGTTKRGIGPAYEDKVGRRSIRMIDLAETNTLMAKIERLLRHHNALRRGMGIAEIDPKTLYDELMQVADEILPFMDCTWRLLDERHRMGQRILFEGAQGASLDNDFGTYPYVTSSNTVSGQAFIGSGMGPGSVHYVLGIAKAYTTRVGEGPFPTEQVNDVGEFLGMRGNEFGVVTGRKRRCGWFDAVLVRQMVKICSVRGIALTKLDVLDGLDEIKICIGYEIDGRKIDYLPSCIEEQARVKPIYETLEGWKEATACTLNWEELPVQAIKYVRRIEELIGVPIALLSTSPEREDTIFIIDPFAD</sequence>
<protein>
    <recommendedName>
        <fullName evidence="1">Adenylosuccinate synthetase</fullName>
        <shortName evidence="1">AMPSase</shortName>
        <shortName evidence="1">AdSS</shortName>
        <ecNumber evidence="1">6.3.4.4</ecNumber>
    </recommendedName>
    <alternativeName>
        <fullName evidence="1">IMP--aspartate ligase</fullName>
    </alternativeName>
</protein>
<gene>
    <name evidence="1" type="primary">purA</name>
    <name type="ordered locus">BARBAKC583_0285</name>
</gene>
<keyword id="KW-0963">Cytoplasm</keyword>
<keyword id="KW-0342">GTP-binding</keyword>
<keyword id="KW-0436">Ligase</keyword>
<keyword id="KW-0460">Magnesium</keyword>
<keyword id="KW-0479">Metal-binding</keyword>
<keyword id="KW-0547">Nucleotide-binding</keyword>
<keyword id="KW-0658">Purine biosynthesis</keyword>
<name>PURA_BARBK</name>
<evidence type="ECO:0000255" key="1">
    <source>
        <dbReference type="HAMAP-Rule" id="MF_00011"/>
    </source>
</evidence>